<accession>B5Y1R3</accession>
<comment type="similarity">
    <text evidence="1">Belongs to the UPF0231 family.</text>
</comment>
<proteinExistence type="inferred from homology"/>
<sequence>MDYEFLRDITGVVKVRMSMDHEAIGHWFNEEVKDNLALLDEVEQAARTVKGSERSWQRAGHEYTLWLDGEEVMIRANQLEFSGDEIEEGMSYYDEESLSLCGVEDFLQVVAAYREFMQQR</sequence>
<feature type="chain" id="PRO_1000136299" description="UPF0231 protein KPK_4613">
    <location>
        <begin position="1"/>
        <end position="120"/>
    </location>
</feature>
<reference key="1">
    <citation type="journal article" date="2008" name="PLoS Genet.">
        <title>Complete genome sequence of the N2-fixing broad host range endophyte Klebsiella pneumoniae 342 and virulence predictions verified in mice.</title>
        <authorList>
            <person name="Fouts D.E."/>
            <person name="Tyler H.L."/>
            <person name="DeBoy R.T."/>
            <person name="Daugherty S."/>
            <person name="Ren Q."/>
            <person name="Badger J.H."/>
            <person name="Durkin A.S."/>
            <person name="Huot H."/>
            <person name="Shrivastava S."/>
            <person name="Kothari S."/>
            <person name="Dodson R.J."/>
            <person name="Mohamoud Y."/>
            <person name="Khouri H."/>
            <person name="Roesch L.F.W."/>
            <person name="Krogfelt K.A."/>
            <person name="Struve C."/>
            <person name="Triplett E.W."/>
            <person name="Methe B.A."/>
        </authorList>
    </citation>
    <scope>NUCLEOTIDE SEQUENCE [LARGE SCALE GENOMIC DNA]</scope>
    <source>
        <strain>342</strain>
    </source>
</reference>
<dbReference type="EMBL" id="CP000964">
    <property type="protein sequence ID" value="ACI06941.1"/>
    <property type="molecule type" value="Genomic_DNA"/>
</dbReference>
<dbReference type="KEGG" id="kpe:KPK_4613"/>
<dbReference type="HOGENOM" id="CLU_139226_0_0_6"/>
<dbReference type="BioCyc" id="KPNE507522:GI0B-4594-MONOMER"/>
<dbReference type="Proteomes" id="UP000001734">
    <property type="component" value="Chromosome"/>
</dbReference>
<dbReference type="HAMAP" id="MF_01053">
    <property type="entry name" value="UPF0231"/>
    <property type="match status" value="1"/>
</dbReference>
<dbReference type="InterPro" id="IPR008249">
    <property type="entry name" value="UPF0231"/>
</dbReference>
<dbReference type="NCBIfam" id="NF003574">
    <property type="entry name" value="PRK05248.1-1"/>
    <property type="match status" value="1"/>
</dbReference>
<dbReference type="NCBIfam" id="NF003576">
    <property type="entry name" value="PRK05248.1-3"/>
    <property type="match status" value="1"/>
</dbReference>
<dbReference type="Pfam" id="PF06062">
    <property type="entry name" value="UPF0231"/>
    <property type="match status" value="1"/>
</dbReference>
<dbReference type="PIRSF" id="PIRSF006287">
    <property type="entry name" value="UCP006287"/>
    <property type="match status" value="1"/>
</dbReference>
<gene>
    <name type="ordered locus">KPK_4613</name>
</gene>
<organism>
    <name type="scientific">Klebsiella pneumoniae (strain 342)</name>
    <dbReference type="NCBI Taxonomy" id="507522"/>
    <lineage>
        <taxon>Bacteria</taxon>
        <taxon>Pseudomonadati</taxon>
        <taxon>Pseudomonadota</taxon>
        <taxon>Gammaproteobacteria</taxon>
        <taxon>Enterobacterales</taxon>
        <taxon>Enterobacteriaceae</taxon>
        <taxon>Klebsiella/Raoultella group</taxon>
        <taxon>Klebsiella</taxon>
        <taxon>Klebsiella pneumoniae complex</taxon>
    </lineage>
</organism>
<protein>
    <recommendedName>
        <fullName evidence="1">UPF0231 protein KPK_4613</fullName>
    </recommendedName>
</protein>
<name>Y4613_KLEP3</name>
<evidence type="ECO:0000255" key="1">
    <source>
        <dbReference type="HAMAP-Rule" id="MF_01053"/>
    </source>
</evidence>